<accession>B7GYL6</accession>
<dbReference type="EMBL" id="CP001172">
    <property type="protein sequence ID" value="ACJ58626.1"/>
    <property type="molecule type" value="Genomic_DNA"/>
</dbReference>
<dbReference type="RefSeq" id="WP_000896934.1">
    <property type="nucleotide sequence ID" value="NZ_CP001172.1"/>
</dbReference>
<dbReference type="GeneID" id="9383489"/>
<dbReference type="HOGENOM" id="CLU_137929_2_3_6"/>
<dbReference type="Proteomes" id="UP000006924">
    <property type="component" value="Chromosome"/>
</dbReference>
<dbReference type="GO" id="GO:0051301">
    <property type="term" value="P:cell division"/>
    <property type="evidence" value="ECO:0007669"/>
    <property type="project" value="UniProtKB-KW"/>
</dbReference>
<dbReference type="GO" id="GO:0032955">
    <property type="term" value="P:regulation of division septum assembly"/>
    <property type="evidence" value="ECO:0007669"/>
    <property type="project" value="InterPro"/>
</dbReference>
<dbReference type="Gene3D" id="3.30.1070.10">
    <property type="entry name" value="Cell division topological specificity factor MinE"/>
    <property type="match status" value="1"/>
</dbReference>
<dbReference type="HAMAP" id="MF_00262">
    <property type="entry name" value="MinE"/>
    <property type="match status" value="1"/>
</dbReference>
<dbReference type="InterPro" id="IPR005527">
    <property type="entry name" value="MinE"/>
</dbReference>
<dbReference type="InterPro" id="IPR036707">
    <property type="entry name" value="MinE_sf"/>
</dbReference>
<dbReference type="NCBIfam" id="TIGR01215">
    <property type="entry name" value="minE"/>
    <property type="match status" value="1"/>
</dbReference>
<dbReference type="NCBIfam" id="NF001422">
    <property type="entry name" value="PRK00296.1"/>
    <property type="match status" value="1"/>
</dbReference>
<dbReference type="Pfam" id="PF03776">
    <property type="entry name" value="MinE"/>
    <property type="match status" value="1"/>
</dbReference>
<dbReference type="SUPFAM" id="SSF55229">
    <property type="entry name" value="Cell division protein MinE topological specificity domain"/>
    <property type="match status" value="1"/>
</dbReference>
<organism>
    <name type="scientific">Acinetobacter baumannii (strain AB307-0294)</name>
    <dbReference type="NCBI Taxonomy" id="557600"/>
    <lineage>
        <taxon>Bacteria</taxon>
        <taxon>Pseudomonadati</taxon>
        <taxon>Pseudomonadota</taxon>
        <taxon>Gammaproteobacteria</taxon>
        <taxon>Moraxellales</taxon>
        <taxon>Moraxellaceae</taxon>
        <taxon>Acinetobacter</taxon>
        <taxon>Acinetobacter calcoaceticus/baumannii complex</taxon>
    </lineage>
</organism>
<comment type="function">
    <text evidence="1">Prevents the cell division inhibition by proteins MinC and MinD at internal division sites while permitting inhibition at polar sites. This ensures cell division at the proper site by restricting the formation of a division septum at the midpoint of the long axis of the cell.</text>
</comment>
<comment type="similarity">
    <text evidence="1">Belongs to the MinE family.</text>
</comment>
<proteinExistence type="inferred from homology"/>
<sequence>MAGFWSKLFSSEEKPSSAQTAKDRLKVIVASEQGLGRRLSQDKIDQMKKEIMQVVSRYVSGVGEQHIQMQVRSEANIEMLEMNINLPEER</sequence>
<name>MINE_ACIB3</name>
<evidence type="ECO:0000255" key="1">
    <source>
        <dbReference type="HAMAP-Rule" id="MF_00262"/>
    </source>
</evidence>
<evidence type="ECO:0000256" key="2">
    <source>
        <dbReference type="SAM" id="MobiDB-lite"/>
    </source>
</evidence>
<keyword id="KW-0131">Cell cycle</keyword>
<keyword id="KW-0132">Cell division</keyword>
<gene>
    <name evidence="1" type="primary">minE</name>
    <name type="ordered locus">ABBFA_002735</name>
</gene>
<reference key="1">
    <citation type="journal article" date="2008" name="J. Bacteriol.">
        <title>Comparative genome sequence analysis of multidrug-resistant Acinetobacter baumannii.</title>
        <authorList>
            <person name="Adams M.D."/>
            <person name="Goglin K."/>
            <person name="Molyneaux N."/>
            <person name="Hujer K.M."/>
            <person name="Lavender H."/>
            <person name="Jamison J.J."/>
            <person name="MacDonald I.J."/>
            <person name="Martin K.M."/>
            <person name="Russo T."/>
            <person name="Campagnari A.A."/>
            <person name="Hujer A.M."/>
            <person name="Bonomo R.A."/>
            <person name="Gill S.R."/>
        </authorList>
    </citation>
    <scope>NUCLEOTIDE SEQUENCE [LARGE SCALE GENOMIC DNA]</scope>
    <source>
        <strain>AB307-0294</strain>
    </source>
</reference>
<protein>
    <recommendedName>
        <fullName evidence="1">Cell division topological specificity factor</fullName>
    </recommendedName>
</protein>
<feature type="chain" id="PRO_1000191265" description="Cell division topological specificity factor">
    <location>
        <begin position="1"/>
        <end position="90"/>
    </location>
</feature>
<feature type="region of interest" description="Disordered" evidence="2">
    <location>
        <begin position="1"/>
        <end position="21"/>
    </location>
</feature>
<feature type="compositionally biased region" description="Basic and acidic residues" evidence="2">
    <location>
        <begin position="10"/>
        <end position="21"/>
    </location>
</feature>